<gene>
    <name evidence="1" type="primary">rnhA</name>
    <name type="ordered locus">BruAb1_0499</name>
</gene>
<proteinExistence type="inferred from homology"/>
<reference key="1">
    <citation type="journal article" date="2005" name="J. Bacteriol.">
        <title>Completion of the genome sequence of Brucella abortus and comparison to the highly similar genomes of Brucella melitensis and Brucella suis.</title>
        <authorList>
            <person name="Halling S.M."/>
            <person name="Peterson-Burch B.D."/>
            <person name="Bricker B.J."/>
            <person name="Zuerner R.L."/>
            <person name="Qing Z."/>
            <person name="Li L.-L."/>
            <person name="Kapur V."/>
            <person name="Alt D.P."/>
            <person name="Olsen S.C."/>
        </authorList>
    </citation>
    <scope>NUCLEOTIDE SEQUENCE [LARGE SCALE GENOMIC DNA]</scope>
    <source>
        <strain>9-941</strain>
    </source>
</reference>
<name>RNH_BRUAB</name>
<feature type="chain" id="PRO_0000195364" description="Ribonuclease H">
    <location>
        <begin position="1"/>
        <end position="154"/>
    </location>
</feature>
<feature type="domain" description="RNase H type-1" evidence="2">
    <location>
        <begin position="1"/>
        <end position="141"/>
    </location>
</feature>
<feature type="binding site" evidence="1">
    <location>
        <position position="9"/>
    </location>
    <ligand>
        <name>Mg(2+)</name>
        <dbReference type="ChEBI" id="CHEBI:18420"/>
        <label>1</label>
    </ligand>
</feature>
<feature type="binding site" evidence="1">
    <location>
        <position position="9"/>
    </location>
    <ligand>
        <name>Mg(2+)</name>
        <dbReference type="ChEBI" id="CHEBI:18420"/>
        <label>2</label>
    </ligand>
</feature>
<feature type="binding site" evidence="1">
    <location>
        <position position="47"/>
    </location>
    <ligand>
        <name>Mg(2+)</name>
        <dbReference type="ChEBI" id="CHEBI:18420"/>
        <label>1</label>
    </ligand>
</feature>
<feature type="binding site" evidence="1">
    <location>
        <position position="69"/>
    </location>
    <ligand>
        <name>Mg(2+)</name>
        <dbReference type="ChEBI" id="CHEBI:18420"/>
        <label>1</label>
    </ligand>
</feature>
<feature type="binding site" evidence="1">
    <location>
        <position position="133"/>
    </location>
    <ligand>
        <name>Mg(2+)</name>
        <dbReference type="ChEBI" id="CHEBI:18420"/>
        <label>2</label>
    </ligand>
</feature>
<evidence type="ECO:0000255" key="1">
    <source>
        <dbReference type="HAMAP-Rule" id="MF_00042"/>
    </source>
</evidence>
<evidence type="ECO:0000255" key="2">
    <source>
        <dbReference type="PROSITE-ProRule" id="PRU00408"/>
    </source>
</evidence>
<protein>
    <recommendedName>
        <fullName evidence="1">Ribonuclease H</fullName>
        <shortName evidence="1">RNase H</shortName>
        <ecNumber evidence="1">3.1.26.4</ecNumber>
    </recommendedName>
</protein>
<accession>Q57EP4</accession>
<sequence>MKRIEAYTDGACSGNPGPGGWGALLRWNGNEKELKGGEAETTNNRMELMAAISALSALKEPCEVDLYTDSVYVRDGISGWIEGWKRNGWKTAAKKPVKNAELWQALDEARKAHKVTWHWIKGHAGHPENERADELARAGMEPFKYAGHRTLKVK</sequence>
<organism>
    <name type="scientific">Brucella abortus biovar 1 (strain 9-941)</name>
    <dbReference type="NCBI Taxonomy" id="262698"/>
    <lineage>
        <taxon>Bacteria</taxon>
        <taxon>Pseudomonadati</taxon>
        <taxon>Pseudomonadota</taxon>
        <taxon>Alphaproteobacteria</taxon>
        <taxon>Hyphomicrobiales</taxon>
        <taxon>Brucellaceae</taxon>
        <taxon>Brucella/Ochrobactrum group</taxon>
        <taxon>Brucella</taxon>
    </lineage>
</organism>
<dbReference type="EC" id="3.1.26.4" evidence="1"/>
<dbReference type="EMBL" id="AE017223">
    <property type="protein sequence ID" value="AAX73890.1"/>
    <property type="molecule type" value="Genomic_DNA"/>
</dbReference>
<dbReference type="RefSeq" id="WP_002963635.1">
    <property type="nucleotide sequence ID" value="NC_006932.1"/>
</dbReference>
<dbReference type="SMR" id="Q57EP4"/>
<dbReference type="EnsemblBacteria" id="AAX73890">
    <property type="protein sequence ID" value="AAX73890"/>
    <property type="gene ID" value="BruAb1_0499"/>
</dbReference>
<dbReference type="GeneID" id="97534154"/>
<dbReference type="KEGG" id="bmb:BruAb1_0499"/>
<dbReference type="HOGENOM" id="CLU_030894_6_0_5"/>
<dbReference type="Proteomes" id="UP000000540">
    <property type="component" value="Chromosome I"/>
</dbReference>
<dbReference type="GO" id="GO:0005737">
    <property type="term" value="C:cytoplasm"/>
    <property type="evidence" value="ECO:0007669"/>
    <property type="project" value="UniProtKB-SubCell"/>
</dbReference>
<dbReference type="GO" id="GO:0000287">
    <property type="term" value="F:magnesium ion binding"/>
    <property type="evidence" value="ECO:0007669"/>
    <property type="project" value="UniProtKB-UniRule"/>
</dbReference>
<dbReference type="GO" id="GO:0003676">
    <property type="term" value="F:nucleic acid binding"/>
    <property type="evidence" value="ECO:0007669"/>
    <property type="project" value="InterPro"/>
</dbReference>
<dbReference type="GO" id="GO:0004523">
    <property type="term" value="F:RNA-DNA hybrid ribonuclease activity"/>
    <property type="evidence" value="ECO:0007669"/>
    <property type="project" value="UniProtKB-UniRule"/>
</dbReference>
<dbReference type="GO" id="GO:0043137">
    <property type="term" value="P:DNA replication, removal of RNA primer"/>
    <property type="evidence" value="ECO:0007669"/>
    <property type="project" value="TreeGrafter"/>
</dbReference>
<dbReference type="CDD" id="cd09278">
    <property type="entry name" value="RNase_HI_prokaryote_like"/>
    <property type="match status" value="1"/>
</dbReference>
<dbReference type="FunFam" id="3.30.420.10:FF:000089">
    <property type="entry name" value="Ribonuclease H"/>
    <property type="match status" value="1"/>
</dbReference>
<dbReference type="Gene3D" id="3.30.420.10">
    <property type="entry name" value="Ribonuclease H-like superfamily/Ribonuclease H"/>
    <property type="match status" value="1"/>
</dbReference>
<dbReference type="HAMAP" id="MF_00042">
    <property type="entry name" value="RNase_H"/>
    <property type="match status" value="1"/>
</dbReference>
<dbReference type="InterPro" id="IPR050092">
    <property type="entry name" value="RNase_H"/>
</dbReference>
<dbReference type="InterPro" id="IPR012337">
    <property type="entry name" value="RNaseH-like_sf"/>
</dbReference>
<dbReference type="InterPro" id="IPR002156">
    <property type="entry name" value="RNaseH_domain"/>
</dbReference>
<dbReference type="InterPro" id="IPR036397">
    <property type="entry name" value="RNaseH_sf"/>
</dbReference>
<dbReference type="InterPro" id="IPR022892">
    <property type="entry name" value="RNaseHI"/>
</dbReference>
<dbReference type="NCBIfam" id="NF001236">
    <property type="entry name" value="PRK00203.1"/>
    <property type="match status" value="1"/>
</dbReference>
<dbReference type="PANTHER" id="PTHR10642">
    <property type="entry name" value="RIBONUCLEASE H1"/>
    <property type="match status" value="1"/>
</dbReference>
<dbReference type="PANTHER" id="PTHR10642:SF26">
    <property type="entry name" value="RIBONUCLEASE H1"/>
    <property type="match status" value="1"/>
</dbReference>
<dbReference type="Pfam" id="PF00075">
    <property type="entry name" value="RNase_H"/>
    <property type="match status" value="1"/>
</dbReference>
<dbReference type="SUPFAM" id="SSF53098">
    <property type="entry name" value="Ribonuclease H-like"/>
    <property type="match status" value="1"/>
</dbReference>
<dbReference type="PROSITE" id="PS50879">
    <property type="entry name" value="RNASE_H_1"/>
    <property type="match status" value="1"/>
</dbReference>
<keyword id="KW-0963">Cytoplasm</keyword>
<keyword id="KW-0255">Endonuclease</keyword>
<keyword id="KW-0378">Hydrolase</keyword>
<keyword id="KW-0460">Magnesium</keyword>
<keyword id="KW-0479">Metal-binding</keyword>
<keyword id="KW-0540">Nuclease</keyword>
<comment type="function">
    <text evidence="1">Endonuclease that specifically degrades the RNA of RNA-DNA hybrids.</text>
</comment>
<comment type="catalytic activity">
    <reaction evidence="1">
        <text>Endonucleolytic cleavage to 5'-phosphomonoester.</text>
        <dbReference type="EC" id="3.1.26.4"/>
    </reaction>
</comment>
<comment type="cofactor">
    <cofactor evidence="1">
        <name>Mg(2+)</name>
        <dbReference type="ChEBI" id="CHEBI:18420"/>
    </cofactor>
    <text evidence="1">Binds 1 Mg(2+) ion per subunit. May bind a second metal ion at a regulatory site, or after substrate binding.</text>
</comment>
<comment type="subunit">
    <text evidence="1">Monomer.</text>
</comment>
<comment type="subcellular location">
    <subcellularLocation>
        <location evidence="1">Cytoplasm</location>
    </subcellularLocation>
</comment>
<comment type="similarity">
    <text evidence="1">Belongs to the RNase H family.</text>
</comment>